<evidence type="ECO:0000255" key="1">
    <source>
        <dbReference type="HAMAP-Rule" id="MF_01522"/>
    </source>
</evidence>
<name>KUP_ECO55</name>
<keyword id="KW-0997">Cell inner membrane</keyword>
<keyword id="KW-1003">Cell membrane</keyword>
<keyword id="KW-0406">Ion transport</keyword>
<keyword id="KW-0472">Membrane</keyword>
<keyword id="KW-0630">Potassium</keyword>
<keyword id="KW-0633">Potassium transport</keyword>
<keyword id="KW-1185">Reference proteome</keyword>
<keyword id="KW-0769">Symport</keyword>
<keyword id="KW-0812">Transmembrane</keyword>
<keyword id="KW-1133">Transmembrane helix</keyword>
<keyword id="KW-0813">Transport</keyword>
<feature type="chain" id="PRO_1000185117" description="Low affinity potassium transport system protein Kup">
    <location>
        <begin position="1"/>
        <end position="622"/>
    </location>
</feature>
<feature type="transmembrane region" description="Helical" evidence="1">
    <location>
        <begin position="9"/>
        <end position="29"/>
    </location>
</feature>
<feature type="transmembrane region" description="Helical" evidence="1">
    <location>
        <begin position="49"/>
        <end position="69"/>
    </location>
</feature>
<feature type="transmembrane region" description="Helical" evidence="1">
    <location>
        <begin position="103"/>
        <end position="123"/>
    </location>
</feature>
<feature type="transmembrane region" description="Helical" evidence="1">
    <location>
        <begin position="137"/>
        <end position="157"/>
    </location>
</feature>
<feature type="transmembrane region" description="Helical" evidence="1">
    <location>
        <begin position="165"/>
        <end position="185"/>
    </location>
</feature>
<feature type="transmembrane region" description="Helical" evidence="1">
    <location>
        <begin position="213"/>
        <end position="233"/>
    </location>
</feature>
<feature type="transmembrane region" description="Helical" evidence="1">
    <location>
        <begin position="247"/>
        <end position="267"/>
    </location>
</feature>
<feature type="transmembrane region" description="Helical" evidence="1">
    <location>
        <begin position="276"/>
        <end position="296"/>
    </location>
</feature>
<feature type="transmembrane region" description="Helical" evidence="1">
    <location>
        <begin position="337"/>
        <end position="357"/>
    </location>
</feature>
<feature type="transmembrane region" description="Helical" evidence="1">
    <location>
        <begin position="363"/>
        <end position="383"/>
    </location>
</feature>
<feature type="transmembrane region" description="Helical" evidence="1">
    <location>
        <begin position="396"/>
        <end position="416"/>
    </location>
</feature>
<feature type="transmembrane region" description="Helical" evidence="1">
    <location>
        <begin position="419"/>
        <end position="439"/>
    </location>
</feature>
<accession>B7L897</accession>
<protein>
    <recommendedName>
        <fullName evidence="1">Low affinity potassium transport system protein Kup</fullName>
    </recommendedName>
    <alternativeName>
        <fullName evidence="1">Kup system potassium uptake protein</fullName>
    </alternativeName>
</protein>
<reference key="1">
    <citation type="journal article" date="2009" name="PLoS Genet.">
        <title>Organised genome dynamics in the Escherichia coli species results in highly diverse adaptive paths.</title>
        <authorList>
            <person name="Touchon M."/>
            <person name="Hoede C."/>
            <person name="Tenaillon O."/>
            <person name="Barbe V."/>
            <person name="Baeriswyl S."/>
            <person name="Bidet P."/>
            <person name="Bingen E."/>
            <person name="Bonacorsi S."/>
            <person name="Bouchier C."/>
            <person name="Bouvet O."/>
            <person name="Calteau A."/>
            <person name="Chiapello H."/>
            <person name="Clermont O."/>
            <person name="Cruveiller S."/>
            <person name="Danchin A."/>
            <person name="Diard M."/>
            <person name="Dossat C."/>
            <person name="Karoui M.E."/>
            <person name="Frapy E."/>
            <person name="Garry L."/>
            <person name="Ghigo J.M."/>
            <person name="Gilles A.M."/>
            <person name="Johnson J."/>
            <person name="Le Bouguenec C."/>
            <person name="Lescat M."/>
            <person name="Mangenot S."/>
            <person name="Martinez-Jehanne V."/>
            <person name="Matic I."/>
            <person name="Nassif X."/>
            <person name="Oztas S."/>
            <person name="Petit M.A."/>
            <person name="Pichon C."/>
            <person name="Rouy Z."/>
            <person name="Ruf C.S."/>
            <person name="Schneider D."/>
            <person name="Tourret J."/>
            <person name="Vacherie B."/>
            <person name="Vallenet D."/>
            <person name="Medigue C."/>
            <person name="Rocha E.P.C."/>
            <person name="Denamur E."/>
        </authorList>
    </citation>
    <scope>NUCLEOTIDE SEQUENCE [LARGE SCALE GENOMIC DNA]</scope>
    <source>
        <strain>55989 / EAEC</strain>
    </source>
</reference>
<organism>
    <name type="scientific">Escherichia coli (strain 55989 / EAEC)</name>
    <dbReference type="NCBI Taxonomy" id="585055"/>
    <lineage>
        <taxon>Bacteria</taxon>
        <taxon>Pseudomonadati</taxon>
        <taxon>Pseudomonadota</taxon>
        <taxon>Gammaproteobacteria</taxon>
        <taxon>Enterobacterales</taxon>
        <taxon>Enterobacteriaceae</taxon>
        <taxon>Escherichia</taxon>
    </lineage>
</organism>
<sequence length="622" mass="69294">MSTDNKQSLPAITLAAIGVVYGDIGTSPLYTLRECLSGQFGFGVERDAVFGFLSLIFWLLIFVVSIKYLTFVMRADNAGEGGILTLMSLAGRNTSARTTSMLVIMGLIGGSFFYGEVVITPAISVMSAIEGLEIVAPQLDTWIVPLSIIVLTLLFMIQKHGTAMVGKLFAPIMLTWFLILAGLGLRSIIANPEVLHALNPMWAVHFFLEYKTVSFIALGAVVLSITGVEALYADMGHFGKFPIRLAWFTVVLPSLTLNYFGQGALLLKNPEAIKNPFFLLAPDWALIPLLIIAALATVIASQAVISGVFSLTRQAVRLGYLSPMRIIHTSEMESGQIYIPFVNWMLYVAVVIVIVSFEHSSNLAAAYGIAVTGTMVLTSILSTTVARQNWHWNKYFVALILIAFLCVDIPLFTANLDKLLSGGWLPLSLGTVMFIVMTTWKSERFRLLRRMHEHGNSLEAMIASLEKSPPVRVPGTAVYMSRAINVIPFALMHNLKHNKVLHERVILLTLRTEDAPYVHNVRRVQIEQLSPTFWRVVASYGWRETPNVEEVFHRCGLEGLSCRMMETSFFMSHESLILGKRPWYLRLRGKLYLLLQRNALRAPDQFEIPPNRVIELGTQVEI</sequence>
<gene>
    <name evidence="1" type="primary">kup</name>
    <name type="ordered locus">EC55989_4222</name>
</gene>
<comment type="function">
    <text evidence="1">Responsible for the low-affinity transport of potassium into the cell. Likely operates as a K(+):H(+) symporter.</text>
</comment>
<comment type="catalytic activity">
    <reaction evidence="1">
        <text>K(+)(in) + H(+)(in) = K(+)(out) + H(+)(out)</text>
        <dbReference type="Rhea" id="RHEA:28490"/>
        <dbReference type="ChEBI" id="CHEBI:15378"/>
        <dbReference type="ChEBI" id="CHEBI:29103"/>
    </reaction>
    <physiologicalReaction direction="right-to-left" evidence="1">
        <dbReference type="Rhea" id="RHEA:28492"/>
    </physiologicalReaction>
</comment>
<comment type="subcellular location">
    <subcellularLocation>
        <location evidence="1">Cell inner membrane</location>
        <topology evidence="1">Multi-pass membrane protein</topology>
    </subcellularLocation>
</comment>
<comment type="similarity">
    <text evidence="1">Belongs to the HAK/KUP transporter (TC 2.A.72) family.</text>
</comment>
<proteinExistence type="inferred from homology"/>
<dbReference type="EMBL" id="CU928145">
    <property type="protein sequence ID" value="CAV00843.1"/>
    <property type="molecule type" value="Genomic_DNA"/>
</dbReference>
<dbReference type="RefSeq" id="WP_000102319.1">
    <property type="nucleotide sequence ID" value="NZ_CP028304.1"/>
</dbReference>
<dbReference type="GeneID" id="75205465"/>
<dbReference type="KEGG" id="eck:EC55989_4222"/>
<dbReference type="HOGENOM" id="CLU_008142_4_2_6"/>
<dbReference type="Proteomes" id="UP000000746">
    <property type="component" value="Chromosome"/>
</dbReference>
<dbReference type="GO" id="GO:0005886">
    <property type="term" value="C:plasma membrane"/>
    <property type="evidence" value="ECO:0007669"/>
    <property type="project" value="UniProtKB-SubCell"/>
</dbReference>
<dbReference type="GO" id="GO:0015079">
    <property type="term" value="F:potassium ion transmembrane transporter activity"/>
    <property type="evidence" value="ECO:0007669"/>
    <property type="project" value="UniProtKB-UniRule"/>
</dbReference>
<dbReference type="GO" id="GO:0015293">
    <property type="term" value="F:symporter activity"/>
    <property type="evidence" value="ECO:0007669"/>
    <property type="project" value="UniProtKB-UniRule"/>
</dbReference>
<dbReference type="HAMAP" id="MF_01522">
    <property type="entry name" value="Kup"/>
    <property type="match status" value="1"/>
</dbReference>
<dbReference type="InterPro" id="IPR003855">
    <property type="entry name" value="K+_transporter"/>
</dbReference>
<dbReference type="InterPro" id="IPR053952">
    <property type="entry name" value="K_trans_C"/>
</dbReference>
<dbReference type="InterPro" id="IPR053951">
    <property type="entry name" value="K_trans_N"/>
</dbReference>
<dbReference type="InterPro" id="IPR023051">
    <property type="entry name" value="Kup"/>
</dbReference>
<dbReference type="NCBIfam" id="TIGR00794">
    <property type="entry name" value="kup"/>
    <property type="match status" value="1"/>
</dbReference>
<dbReference type="NCBIfam" id="NF008015">
    <property type="entry name" value="PRK10745.1"/>
    <property type="match status" value="1"/>
</dbReference>
<dbReference type="PANTHER" id="PTHR30540:SF79">
    <property type="entry name" value="LOW AFFINITY POTASSIUM TRANSPORT SYSTEM PROTEIN KUP"/>
    <property type="match status" value="1"/>
</dbReference>
<dbReference type="PANTHER" id="PTHR30540">
    <property type="entry name" value="OSMOTIC STRESS POTASSIUM TRANSPORTER"/>
    <property type="match status" value="1"/>
</dbReference>
<dbReference type="Pfam" id="PF02705">
    <property type="entry name" value="K_trans"/>
    <property type="match status" value="1"/>
</dbReference>
<dbReference type="Pfam" id="PF22776">
    <property type="entry name" value="K_trans_C"/>
    <property type="match status" value="1"/>
</dbReference>